<proteinExistence type="inferred from homology"/>
<evidence type="ECO:0000255" key="1">
    <source>
        <dbReference type="HAMAP-Rule" id="MF_00083"/>
    </source>
</evidence>
<keyword id="KW-0963">Cytoplasm</keyword>
<keyword id="KW-0378">Hydrolase</keyword>
<keyword id="KW-1185">Reference proteome</keyword>
<keyword id="KW-0694">RNA-binding</keyword>
<keyword id="KW-0820">tRNA-binding</keyword>
<gene>
    <name evidence="1" type="primary">pth</name>
    <name type="ordered locus">ZMO1911</name>
</gene>
<protein>
    <recommendedName>
        <fullName evidence="1">Peptidyl-tRNA hydrolase</fullName>
        <shortName evidence="1">Pth</shortName>
        <ecNumber evidence="1">3.1.1.29</ecNumber>
    </recommendedName>
</protein>
<sequence>MQIWAGLGNPGSSYALNRHNVGFMAVDMLASEKSFAPWKRAFQGQVSLGQIDQERILLLKPATFMNESGRAIGEAMRFYKLAPEDVTVFHDELDIAPMRVKVKKGGGAAGHNGLRSTIAHIGQSFRRVRLGIGHPGEKSRVHDYVLGNFAKSETDSLADMLNAINQAIPWLANDDDARFMSEIALRRQS</sequence>
<comment type="function">
    <text evidence="1">Hydrolyzes ribosome-free peptidyl-tRNAs (with 1 or more amino acids incorporated), which drop off the ribosome during protein synthesis, or as a result of ribosome stalling.</text>
</comment>
<comment type="function">
    <text evidence="1">Catalyzes the release of premature peptidyl moieties from peptidyl-tRNA molecules trapped in stalled 50S ribosomal subunits, and thus maintains levels of free tRNAs and 50S ribosomes.</text>
</comment>
<comment type="catalytic activity">
    <reaction evidence="1">
        <text>an N-acyl-L-alpha-aminoacyl-tRNA + H2O = an N-acyl-L-amino acid + a tRNA + H(+)</text>
        <dbReference type="Rhea" id="RHEA:54448"/>
        <dbReference type="Rhea" id="RHEA-COMP:10123"/>
        <dbReference type="Rhea" id="RHEA-COMP:13883"/>
        <dbReference type="ChEBI" id="CHEBI:15377"/>
        <dbReference type="ChEBI" id="CHEBI:15378"/>
        <dbReference type="ChEBI" id="CHEBI:59874"/>
        <dbReference type="ChEBI" id="CHEBI:78442"/>
        <dbReference type="ChEBI" id="CHEBI:138191"/>
        <dbReference type="EC" id="3.1.1.29"/>
    </reaction>
</comment>
<comment type="subunit">
    <text evidence="1">Monomer.</text>
</comment>
<comment type="subcellular location">
    <subcellularLocation>
        <location evidence="1">Cytoplasm</location>
    </subcellularLocation>
</comment>
<comment type="similarity">
    <text evidence="1">Belongs to the PTH family.</text>
</comment>
<feature type="chain" id="PRO_0000187865" description="Peptidyl-tRNA hydrolase">
    <location>
        <begin position="1"/>
        <end position="189"/>
    </location>
</feature>
<feature type="active site" description="Proton acceptor" evidence="1">
    <location>
        <position position="19"/>
    </location>
</feature>
<feature type="binding site" evidence="1">
    <location>
        <position position="14"/>
    </location>
    <ligand>
        <name>tRNA</name>
        <dbReference type="ChEBI" id="CHEBI:17843"/>
    </ligand>
</feature>
<feature type="binding site" evidence="1">
    <location>
        <position position="64"/>
    </location>
    <ligand>
        <name>tRNA</name>
        <dbReference type="ChEBI" id="CHEBI:17843"/>
    </ligand>
</feature>
<feature type="binding site" evidence="1">
    <location>
        <position position="66"/>
    </location>
    <ligand>
        <name>tRNA</name>
        <dbReference type="ChEBI" id="CHEBI:17843"/>
    </ligand>
</feature>
<feature type="binding site" evidence="1">
    <location>
        <position position="112"/>
    </location>
    <ligand>
        <name>tRNA</name>
        <dbReference type="ChEBI" id="CHEBI:17843"/>
    </ligand>
</feature>
<feature type="site" description="Discriminates between blocked and unblocked aminoacyl-tRNA" evidence="1">
    <location>
        <position position="9"/>
    </location>
</feature>
<feature type="site" description="Stabilizes the basic form of H active site to accept a proton" evidence="1">
    <location>
        <position position="91"/>
    </location>
</feature>
<reference key="1">
    <citation type="journal article" date="2005" name="Nat. Biotechnol.">
        <title>The genome sequence of the ethanologenic bacterium Zymomonas mobilis ZM4.</title>
        <authorList>
            <person name="Seo J.-S."/>
            <person name="Chong H."/>
            <person name="Park H.S."/>
            <person name="Yoon K.-O."/>
            <person name="Jung C."/>
            <person name="Kim J.J."/>
            <person name="Hong J.H."/>
            <person name="Kim H."/>
            <person name="Kim J.-H."/>
            <person name="Kil J.-I."/>
            <person name="Park C.J."/>
            <person name="Oh H.-M."/>
            <person name="Lee J.-S."/>
            <person name="Jin S.-J."/>
            <person name="Um H.-W."/>
            <person name="Lee H.-J."/>
            <person name="Oh S.-J."/>
            <person name="Kim J.Y."/>
            <person name="Kang H.L."/>
            <person name="Lee S.Y."/>
            <person name="Lee K.J."/>
            <person name="Kang H.S."/>
        </authorList>
    </citation>
    <scope>NUCLEOTIDE SEQUENCE [LARGE SCALE GENOMIC DNA]</scope>
    <source>
        <strain>ATCC 31821 / ZM4 / CP4</strain>
    </source>
</reference>
<accession>Q5NL75</accession>
<name>PTH_ZYMMO</name>
<dbReference type="EC" id="3.1.1.29" evidence="1"/>
<dbReference type="EMBL" id="AE008692">
    <property type="protein sequence ID" value="AAV90535.1"/>
    <property type="molecule type" value="Genomic_DNA"/>
</dbReference>
<dbReference type="RefSeq" id="WP_011241636.1">
    <property type="nucleotide sequence ID" value="NZ_CP035711.1"/>
</dbReference>
<dbReference type="SMR" id="Q5NL75"/>
<dbReference type="STRING" id="264203.ZMO1911"/>
<dbReference type="KEGG" id="zmo:ZMO1911"/>
<dbReference type="eggNOG" id="COG0193">
    <property type="taxonomic scope" value="Bacteria"/>
</dbReference>
<dbReference type="HOGENOM" id="CLU_062456_1_0_5"/>
<dbReference type="Proteomes" id="UP000001173">
    <property type="component" value="Chromosome"/>
</dbReference>
<dbReference type="GO" id="GO:0005737">
    <property type="term" value="C:cytoplasm"/>
    <property type="evidence" value="ECO:0007669"/>
    <property type="project" value="UniProtKB-SubCell"/>
</dbReference>
<dbReference type="GO" id="GO:0004045">
    <property type="term" value="F:peptidyl-tRNA hydrolase activity"/>
    <property type="evidence" value="ECO:0007669"/>
    <property type="project" value="UniProtKB-UniRule"/>
</dbReference>
<dbReference type="GO" id="GO:0000049">
    <property type="term" value="F:tRNA binding"/>
    <property type="evidence" value="ECO:0007669"/>
    <property type="project" value="UniProtKB-UniRule"/>
</dbReference>
<dbReference type="GO" id="GO:0006515">
    <property type="term" value="P:protein quality control for misfolded or incompletely synthesized proteins"/>
    <property type="evidence" value="ECO:0007669"/>
    <property type="project" value="UniProtKB-UniRule"/>
</dbReference>
<dbReference type="GO" id="GO:0072344">
    <property type="term" value="P:rescue of stalled ribosome"/>
    <property type="evidence" value="ECO:0007669"/>
    <property type="project" value="UniProtKB-UniRule"/>
</dbReference>
<dbReference type="CDD" id="cd00462">
    <property type="entry name" value="PTH"/>
    <property type="match status" value="1"/>
</dbReference>
<dbReference type="FunFam" id="3.40.50.1470:FF:000001">
    <property type="entry name" value="Peptidyl-tRNA hydrolase"/>
    <property type="match status" value="1"/>
</dbReference>
<dbReference type="Gene3D" id="3.40.50.1470">
    <property type="entry name" value="Peptidyl-tRNA hydrolase"/>
    <property type="match status" value="1"/>
</dbReference>
<dbReference type="HAMAP" id="MF_00083">
    <property type="entry name" value="Pept_tRNA_hydro_bact"/>
    <property type="match status" value="1"/>
</dbReference>
<dbReference type="InterPro" id="IPR001328">
    <property type="entry name" value="Pept_tRNA_hydro"/>
</dbReference>
<dbReference type="InterPro" id="IPR018171">
    <property type="entry name" value="Pept_tRNA_hydro_CS"/>
</dbReference>
<dbReference type="InterPro" id="IPR036416">
    <property type="entry name" value="Pept_tRNA_hydro_sf"/>
</dbReference>
<dbReference type="NCBIfam" id="TIGR00447">
    <property type="entry name" value="pth"/>
    <property type="match status" value="1"/>
</dbReference>
<dbReference type="PANTHER" id="PTHR17224">
    <property type="entry name" value="PEPTIDYL-TRNA HYDROLASE"/>
    <property type="match status" value="1"/>
</dbReference>
<dbReference type="PANTHER" id="PTHR17224:SF1">
    <property type="entry name" value="PEPTIDYL-TRNA HYDROLASE"/>
    <property type="match status" value="1"/>
</dbReference>
<dbReference type="Pfam" id="PF01195">
    <property type="entry name" value="Pept_tRNA_hydro"/>
    <property type="match status" value="1"/>
</dbReference>
<dbReference type="SUPFAM" id="SSF53178">
    <property type="entry name" value="Peptidyl-tRNA hydrolase-like"/>
    <property type="match status" value="1"/>
</dbReference>
<dbReference type="PROSITE" id="PS01195">
    <property type="entry name" value="PEPT_TRNA_HYDROL_1"/>
    <property type="match status" value="1"/>
</dbReference>
<dbReference type="PROSITE" id="PS01196">
    <property type="entry name" value="PEPT_TRNA_HYDROL_2"/>
    <property type="match status" value="1"/>
</dbReference>
<organism>
    <name type="scientific">Zymomonas mobilis subsp. mobilis (strain ATCC 31821 / ZM4 / CP4)</name>
    <dbReference type="NCBI Taxonomy" id="264203"/>
    <lineage>
        <taxon>Bacteria</taxon>
        <taxon>Pseudomonadati</taxon>
        <taxon>Pseudomonadota</taxon>
        <taxon>Alphaproteobacteria</taxon>
        <taxon>Sphingomonadales</taxon>
        <taxon>Zymomonadaceae</taxon>
        <taxon>Zymomonas</taxon>
    </lineage>
</organism>